<evidence type="ECO:0000255" key="1">
    <source>
        <dbReference type="HAMAP-Rule" id="MF_00024"/>
    </source>
</evidence>
<accession>Q57MW3</accession>
<keyword id="KW-1003">Cell membrane</keyword>
<keyword id="KW-0169">Cobalamin biosynthesis</keyword>
<keyword id="KW-0472">Membrane</keyword>
<keyword id="KW-0812">Transmembrane</keyword>
<keyword id="KW-1133">Transmembrane helix</keyword>
<proteinExistence type="inferred from homology"/>
<feature type="chain" id="PRO_1000057217" description="Cobalamin biosynthesis protein CbiB">
    <location>
        <begin position="1"/>
        <end position="319"/>
    </location>
</feature>
<feature type="transmembrane region" description="Helical" evidence="1">
    <location>
        <begin position="56"/>
        <end position="76"/>
    </location>
</feature>
<feature type="transmembrane region" description="Helical" evidence="1">
    <location>
        <begin position="82"/>
        <end position="102"/>
    </location>
</feature>
<feature type="transmembrane region" description="Helical" evidence="1">
    <location>
        <begin position="153"/>
        <end position="173"/>
    </location>
</feature>
<feature type="transmembrane region" description="Helical" evidence="1">
    <location>
        <begin position="204"/>
        <end position="224"/>
    </location>
</feature>
<feature type="transmembrane region" description="Helical" evidence="1">
    <location>
        <begin position="296"/>
        <end position="316"/>
    </location>
</feature>
<comment type="function">
    <text evidence="1">Converts cobyric acid to cobinamide by the addition of aminopropanol on the F carboxylic group. However, the true cosubstrate could be (R)-1-amino-2-propanol O-2-phosphate, leading to cobinamide phosphate.</text>
</comment>
<comment type="pathway">
    <text evidence="1">Cofactor biosynthesis; adenosylcobalamin biosynthesis.</text>
</comment>
<comment type="subcellular location">
    <subcellularLocation>
        <location evidence="1">Cell membrane</location>
        <topology evidence="1">Multi-pass membrane protein</topology>
    </subcellularLocation>
</comment>
<comment type="similarity">
    <text evidence="1">Belongs to the CobD/CbiB family.</text>
</comment>
<sequence>MMILAWCIAWVLDFIIGDPQHWPHPVRWIGRLITFVQRIVRRYCPGDKALRIGGGVMWVVVVGATWGVAWGVLALAQRIHPWFGWSVEVWMIFTTLAGRSLARAAQEVERPLRENDLAESRIKLSWIVGRDTSQLQPAQINRAVVETVAENTVDGIIAPLFFLFLGGAPLAMAYKAVNTLDSMVGYKHEKYRAIGMVSARMDDVANYLPARLSWLLLGIAAGLCRLSGWRALRIGWRDRYNHSSPNCAWSEACVAGALGIQLGGPNNYFGERVDKPWIGDAQRDISVDDISRTIRLMWVASTLALALFIAARCGLSGLA</sequence>
<gene>
    <name evidence="1" type="primary">cbiB</name>
    <name type="ordered locus">SCH_2042</name>
</gene>
<reference key="1">
    <citation type="journal article" date="2005" name="Nucleic Acids Res.">
        <title>The genome sequence of Salmonella enterica serovar Choleraesuis, a highly invasive and resistant zoonotic pathogen.</title>
        <authorList>
            <person name="Chiu C.-H."/>
            <person name="Tang P."/>
            <person name="Chu C."/>
            <person name="Hu S."/>
            <person name="Bao Q."/>
            <person name="Yu J."/>
            <person name="Chou Y.-Y."/>
            <person name="Wang H.-S."/>
            <person name="Lee Y.-S."/>
        </authorList>
    </citation>
    <scope>NUCLEOTIDE SEQUENCE [LARGE SCALE GENOMIC DNA]</scope>
    <source>
        <strain>SC-B67</strain>
    </source>
</reference>
<name>CBIB_SALCH</name>
<dbReference type="EMBL" id="AE017220">
    <property type="protein sequence ID" value="AAX65948.1"/>
    <property type="molecule type" value="Genomic_DNA"/>
</dbReference>
<dbReference type="RefSeq" id="WP_001540331.1">
    <property type="nucleotide sequence ID" value="NC_006905.1"/>
</dbReference>
<dbReference type="KEGG" id="sec:SCH_2042"/>
<dbReference type="HOGENOM" id="CLU_054212_0_0_6"/>
<dbReference type="UniPathway" id="UPA00148"/>
<dbReference type="Proteomes" id="UP000000538">
    <property type="component" value="Chromosome"/>
</dbReference>
<dbReference type="GO" id="GO:0005886">
    <property type="term" value="C:plasma membrane"/>
    <property type="evidence" value="ECO:0007669"/>
    <property type="project" value="UniProtKB-SubCell"/>
</dbReference>
<dbReference type="GO" id="GO:0015420">
    <property type="term" value="F:ABC-type vitamin B12 transporter activity"/>
    <property type="evidence" value="ECO:0007669"/>
    <property type="project" value="UniProtKB-UniRule"/>
</dbReference>
<dbReference type="GO" id="GO:0048472">
    <property type="term" value="F:threonine-phosphate decarboxylase activity"/>
    <property type="evidence" value="ECO:0007669"/>
    <property type="project" value="InterPro"/>
</dbReference>
<dbReference type="GO" id="GO:0009236">
    <property type="term" value="P:cobalamin biosynthetic process"/>
    <property type="evidence" value="ECO:0007669"/>
    <property type="project" value="UniProtKB-UniRule"/>
</dbReference>
<dbReference type="HAMAP" id="MF_00024">
    <property type="entry name" value="CobD_CbiB"/>
    <property type="match status" value="1"/>
</dbReference>
<dbReference type="InterPro" id="IPR004485">
    <property type="entry name" value="Cobalamin_biosynth_CobD/CbiB"/>
</dbReference>
<dbReference type="NCBIfam" id="TIGR00380">
    <property type="entry name" value="cobal_cbiB"/>
    <property type="match status" value="1"/>
</dbReference>
<dbReference type="PANTHER" id="PTHR34308">
    <property type="entry name" value="COBALAMIN BIOSYNTHESIS PROTEIN CBIB"/>
    <property type="match status" value="1"/>
</dbReference>
<dbReference type="PANTHER" id="PTHR34308:SF1">
    <property type="entry name" value="COBALAMIN BIOSYNTHESIS PROTEIN CBIB"/>
    <property type="match status" value="1"/>
</dbReference>
<dbReference type="Pfam" id="PF03186">
    <property type="entry name" value="CobD_Cbib"/>
    <property type="match status" value="1"/>
</dbReference>
<organism>
    <name type="scientific">Salmonella choleraesuis (strain SC-B67)</name>
    <dbReference type="NCBI Taxonomy" id="321314"/>
    <lineage>
        <taxon>Bacteria</taxon>
        <taxon>Pseudomonadati</taxon>
        <taxon>Pseudomonadota</taxon>
        <taxon>Gammaproteobacteria</taxon>
        <taxon>Enterobacterales</taxon>
        <taxon>Enterobacteriaceae</taxon>
        <taxon>Salmonella</taxon>
    </lineage>
</organism>
<protein>
    <recommendedName>
        <fullName evidence="1">Cobalamin biosynthesis protein CbiB</fullName>
    </recommendedName>
</protein>